<organism>
    <name type="scientific">Ectopseudomonas mendocina (strain ymp)</name>
    <name type="common">Pseudomonas mendocina</name>
    <dbReference type="NCBI Taxonomy" id="399739"/>
    <lineage>
        <taxon>Bacteria</taxon>
        <taxon>Pseudomonadati</taxon>
        <taxon>Pseudomonadota</taxon>
        <taxon>Gammaproteobacteria</taxon>
        <taxon>Pseudomonadales</taxon>
        <taxon>Pseudomonadaceae</taxon>
        <taxon>Ectopseudomonas</taxon>
    </lineage>
</organism>
<reference key="1">
    <citation type="submission" date="2007-04" db="EMBL/GenBank/DDBJ databases">
        <title>Complete sequence of Pseudomonas mendocina ymp.</title>
        <authorList>
            <consortium name="US DOE Joint Genome Institute"/>
            <person name="Copeland A."/>
            <person name="Lucas S."/>
            <person name="Lapidus A."/>
            <person name="Barry K."/>
            <person name="Glavina del Rio T."/>
            <person name="Dalin E."/>
            <person name="Tice H."/>
            <person name="Pitluck S."/>
            <person name="Kiss H."/>
            <person name="Brettin T."/>
            <person name="Detter J.C."/>
            <person name="Bruce D."/>
            <person name="Han C."/>
            <person name="Schmutz J."/>
            <person name="Larimer F."/>
            <person name="Land M."/>
            <person name="Hauser L."/>
            <person name="Kyrpides N."/>
            <person name="Mikhailova N."/>
            <person name="Hersman L."/>
            <person name="Dubois J."/>
            <person name="Maurice P."/>
            <person name="Richardson P."/>
        </authorList>
    </citation>
    <scope>NUCLEOTIDE SEQUENCE [LARGE SCALE GENOMIC DNA]</scope>
    <source>
        <strain>ymp</strain>
    </source>
</reference>
<gene>
    <name evidence="1" type="primary">purH</name>
    <name type="ordered locus">Pmen_0708</name>
</gene>
<feature type="chain" id="PRO_1000018940" description="Bifunctional purine biosynthesis protein PurH">
    <location>
        <begin position="1"/>
        <end position="535"/>
    </location>
</feature>
<feature type="domain" description="MGS-like" evidence="2">
    <location>
        <begin position="6"/>
        <end position="151"/>
    </location>
</feature>
<sequence length="535" mass="57246">MTDQTTRLPVRRALISVSDKTGILEFARELSALGVEILSTGGTYKLLKDNGVAAVEVADYTGFPEMMDGRVKTLHPKIHGGILGRRALDGAVMDEHGIKPIDLVAVNLYPFEATVAKPDCDLADAIENIDIGGPTMVRSAAKNHKDVAIVVNTGDYAGIVESLKAGGLTYAQRFDLALKAFEHTAAYDGMIANYLGTIDLAADTLSTEGRGAFPRTFNSQFIKAQEMRYGENPHQSAAFYVEAKKGEASVSTAIQLQGKELSFNNVADTDAALECVKSFVKPACVIVKHANPCGVAVVPEDEGGIRKAYDLAYATDTESAFGGIIAFNRELDGETAKAIVERQFVEVIIAPKISAAAREVVAAKANVRLLECGEWSAERAAGWDFKRVNGGLLVQSRDIGMIKAEDLKIVTQRAPSEQEIHDLIFAWKVAKFVKSNAIVYAKNRQTVGVGAGQMSRVNSARIAAIKAEHAGLQVQGAVMASDAFFPFRDGIDNAAKAGITAVIQPGGSMRDAEVIAAADEAGIAMVFTGMRHFRH</sequence>
<proteinExistence type="inferred from homology"/>
<comment type="catalytic activity">
    <reaction evidence="1">
        <text>(6R)-10-formyltetrahydrofolate + 5-amino-1-(5-phospho-beta-D-ribosyl)imidazole-4-carboxamide = 5-formamido-1-(5-phospho-D-ribosyl)imidazole-4-carboxamide + (6S)-5,6,7,8-tetrahydrofolate</text>
        <dbReference type="Rhea" id="RHEA:22192"/>
        <dbReference type="ChEBI" id="CHEBI:57453"/>
        <dbReference type="ChEBI" id="CHEBI:58467"/>
        <dbReference type="ChEBI" id="CHEBI:58475"/>
        <dbReference type="ChEBI" id="CHEBI:195366"/>
        <dbReference type="EC" id="2.1.2.3"/>
    </reaction>
</comment>
<comment type="catalytic activity">
    <reaction evidence="1">
        <text>IMP + H2O = 5-formamido-1-(5-phospho-D-ribosyl)imidazole-4-carboxamide</text>
        <dbReference type="Rhea" id="RHEA:18445"/>
        <dbReference type="ChEBI" id="CHEBI:15377"/>
        <dbReference type="ChEBI" id="CHEBI:58053"/>
        <dbReference type="ChEBI" id="CHEBI:58467"/>
        <dbReference type="EC" id="3.5.4.10"/>
    </reaction>
</comment>
<comment type="pathway">
    <text evidence="1">Purine metabolism; IMP biosynthesis via de novo pathway; 5-formamido-1-(5-phospho-D-ribosyl)imidazole-4-carboxamide from 5-amino-1-(5-phospho-D-ribosyl)imidazole-4-carboxamide (10-formyl THF route): step 1/1.</text>
</comment>
<comment type="pathway">
    <text evidence="1">Purine metabolism; IMP biosynthesis via de novo pathway; IMP from 5-formamido-1-(5-phospho-D-ribosyl)imidazole-4-carboxamide: step 1/1.</text>
</comment>
<comment type="domain">
    <text evidence="1">The IMP cyclohydrolase activity resides in the N-terminal region.</text>
</comment>
<comment type="similarity">
    <text evidence="1">Belongs to the PurH family.</text>
</comment>
<protein>
    <recommendedName>
        <fullName evidence="1">Bifunctional purine biosynthesis protein PurH</fullName>
    </recommendedName>
    <domain>
        <recommendedName>
            <fullName evidence="1">Phosphoribosylaminoimidazolecarboxamide formyltransferase</fullName>
            <ecNumber evidence="1">2.1.2.3</ecNumber>
        </recommendedName>
        <alternativeName>
            <fullName evidence="1">AICAR transformylase</fullName>
        </alternativeName>
    </domain>
    <domain>
        <recommendedName>
            <fullName evidence="1">IMP cyclohydrolase</fullName>
            <ecNumber evidence="1">3.5.4.10</ecNumber>
        </recommendedName>
        <alternativeName>
            <fullName evidence="1">ATIC</fullName>
        </alternativeName>
        <alternativeName>
            <fullName evidence="1">IMP synthase</fullName>
        </alternativeName>
        <alternativeName>
            <fullName evidence="1">Inosinicase</fullName>
        </alternativeName>
    </domain>
</protein>
<dbReference type="EC" id="2.1.2.3" evidence="1"/>
<dbReference type="EC" id="3.5.4.10" evidence="1"/>
<dbReference type="EMBL" id="CP000680">
    <property type="protein sequence ID" value="ABP83476.1"/>
    <property type="molecule type" value="Genomic_DNA"/>
</dbReference>
<dbReference type="SMR" id="A4XQ60"/>
<dbReference type="STRING" id="399739.Pmen_0708"/>
<dbReference type="KEGG" id="pmy:Pmen_0708"/>
<dbReference type="PATRIC" id="fig|399739.8.peg.718"/>
<dbReference type="eggNOG" id="COG0138">
    <property type="taxonomic scope" value="Bacteria"/>
</dbReference>
<dbReference type="HOGENOM" id="CLU_016316_5_2_6"/>
<dbReference type="OrthoDB" id="9802065at2"/>
<dbReference type="UniPathway" id="UPA00074">
    <property type="reaction ID" value="UER00133"/>
</dbReference>
<dbReference type="UniPathway" id="UPA00074">
    <property type="reaction ID" value="UER00135"/>
</dbReference>
<dbReference type="GO" id="GO:0005829">
    <property type="term" value="C:cytosol"/>
    <property type="evidence" value="ECO:0007669"/>
    <property type="project" value="TreeGrafter"/>
</dbReference>
<dbReference type="GO" id="GO:0003937">
    <property type="term" value="F:IMP cyclohydrolase activity"/>
    <property type="evidence" value="ECO:0007669"/>
    <property type="project" value="UniProtKB-UniRule"/>
</dbReference>
<dbReference type="GO" id="GO:0004643">
    <property type="term" value="F:phosphoribosylaminoimidazolecarboxamide formyltransferase activity"/>
    <property type="evidence" value="ECO:0007669"/>
    <property type="project" value="UniProtKB-UniRule"/>
</dbReference>
<dbReference type="GO" id="GO:0006189">
    <property type="term" value="P:'de novo' IMP biosynthetic process"/>
    <property type="evidence" value="ECO:0007669"/>
    <property type="project" value="UniProtKB-UniRule"/>
</dbReference>
<dbReference type="CDD" id="cd01421">
    <property type="entry name" value="IMPCH"/>
    <property type="match status" value="1"/>
</dbReference>
<dbReference type="FunFam" id="3.40.140.20:FF:000001">
    <property type="entry name" value="Bifunctional purine biosynthesis protein PurH"/>
    <property type="match status" value="1"/>
</dbReference>
<dbReference type="FunFam" id="3.40.140.20:FF:000002">
    <property type="entry name" value="Bifunctional purine biosynthesis protein PurH"/>
    <property type="match status" value="1"/>
</dbReference>
<dbReference type="FunFam" id="3.40.50.1380:FF:000001">
    <property type="entry name" value="Bifunctional purine biosynthesis protein PurH"/>
    <property type="match status" value="1"/>
</dbReference>
<dbReference type="Gene3D" id="3.40.140.20">
    <property type="match status" value="2"/>
</dbReference>
<dbReference type="Gene3D" id="3.40.50.1380">
    <property type="entry name" value="Methylglyoxal synthase-like domain"/>
    <property type="match status" value="1"/>
</dbReference>
<dbReference type="HAMAP" id="MF_00139">
    <property type="entry name" value="PurH"/>
    <property type="match status" value="1"/>
</dbReference>
<dbReference type="InterPro" id="IPR024051">
    <property type="entry name" value="AICAR_Tfase_dup_dom_sf"/>
</dbReference>
<dbReference type="InterPro" id="IPR016193">
    <property type="entry name" value="Cytidine_deaminase-like"/>
</dbReference>
<dbReference type="InterPro" id="IPR011607">
    <property type="entry name" value="MGS-like_dom"/>
</dbReference>
<dbReference type="InterPro" id="IPR036914">
    <property type="entry name" value="MGS-like_dom_sf"/>
</dbReference>
<dbReference type="InterPro" id="IPR002695">
    <property type="entry name" value="PurH-like"/>
</dbReference>
<dbReference type="NCBIfam" id="NF002049">
    <property type="entry name" value="PRK00881.1"/>
    <property type="match status" value="1"/>
</dbReference>
<dbReference type="NCBIfam" id="TIGR00355">
    <property type="entry name" value="purH"/>
    <property type="match status" value="1"/>
</dbReference>
<dbReference type="PANTHER" id="PTHR11692:SF0">
    <property type="entry name" value="BIFUNCTIONAL PURINE BIOSYNTHESIS PROTEIN ATIC"/>
    <property type="match status" value="1"/>
</dbReference>
<dbReference type="PANTHER" id="PTHR11692">
    <property type="entry name" value="BIFUNCTIONAL PURINE BIOSYNTHESIS PROTEIN PURH"/>
    <property type="match status" value="1"/>
</dbReference>
<dbReference type="Pfam" id="PF01808">
    <property type="entry name" value="AICARFT_IMPCHas"/>
    <property type="match status" value="1"/>
</dbReference>
<dbReference type="Pfam" id="PF02142">
    <property type="entry name" value="MGS"/>
    <property type="match status" value="1"/>
</dbReference>
<dbReference type="PIRSF" id="PIRSF000414">
    <property type="entry name" value="AICARFT_IMPCHas"/>
    <property type="match status" value="1"/>
</dbReference>
<dbReference type="SMART" id="SM00798">
    <property type="entry name" value="AICARFT_IMPCHas"/>
    <property type="match status" value="1"/>
</dbReference>
<dbReference type="SMART" id="SM00851">
    <property type="entry name" value="MGS"/>
    <property type="match status" value="1"/>
</dbReference>
<dbReference type="SUPFAM" id="SSF53927">
    <property type="entry name" value="Cytidine deaminase-like"/>
    <property type="match status" value="1"/>
</dbReference>
<dbReference type="SUPFAM" id="SSF52335">
    <property type="entry name" value="Methylglyoxal synthase-like"/>
    <property type="match status" value="1"/>
</dbReference>
<dbReference type="PROSITE" id="PS51855">
    <property type="entry name" value="MGS"/>
    <property type="match status" value="1"/>
</dbReference>
<accession>A4XQ60</accession>
<evidence type="ECO:0000255" key="1">
    <source>
        <dbReference type="HAMAP-Rule" id="MF_00139"/>
    </source>
</evidence>
<evidence type="ECO:0000255" key="2">
    <source>
        <dbReference type="PROSITE-ProRule" id="PRU01202"/>
    </source>
</evidence>
<name>PUR9_ECTM1</name>
<keyword id="KW-0378">Hydrolase</keyword>
<keyword id="KW-0511">Multifunctional enzyme</keyword>
<keyword id="KW-0658">Purine biosynthesis</keyword>
<keyword id="KW-0808">Transferase</keyword>